<accession>A0A4P8W7F5</accession>
<sequence>MEKAKDSLPTTGDPVPSQGTINPVDETGGSASDEKKAKKGCDFWFTFSSLVLTAFLSALEGSVVSTALPTIARALEASENYVWVVNVYYLSKYETWLTYLLRFSSAAFQPIYGQLADLWGRRWLTIGAVVIFTVGSGICGGATSIDMLIGGRAIQGLGSAGINMLVELILCDLLPLRERGQFFGIIFMFVILGSVIGPFLGGILVDRVSWRWVFYINIPFSGVCVVLLFFFLHIKNAGTGNFIDKVKRIDFFGNFLLAASVGSCLFALTYGDTRYPFSDTRIIVSLVLGLLGHVAFMFFEASPWCKEPVMPMVLFKNRTSAGAYIATFLQTLVSFWVLYFLPLYFQSTQLVSATRSGVMLLPFSVVYALSSLAGGALTTKLGRFRNIHFASFALMTIGMGTLTILNRSTSLAVIVVLEMIVALAIGVPTANLLTAIQAALPDELNALSTGTFAFLRSVGTIWGVSIPAAIFNNRFDQLLPELSDPTAVRALQRGGAYQQATSEFVDSFPSDVRDVIISIYERSLERVWQIGIVFAGVGFLVIFLERDLKLGTQKKTEDIEINDIPQTAADNSASRPNTINDTASQAPILKQRRSTNQERETV</sequence>
<dbReference type="EMBL" id="MK801691">
    <property type="protein sequence ID" value="QCS37513.1"/>
    <property type="molecule type" value="Genomic_DNA"/>
</dbReference>
<dbReference type="SMR" id="A0A4P8W7F5"/>
<dbReference type="GlyCosmos" id="A0A4P8W7F5">
    <property type="glycosylation" value="2 sites, No reported glycans"/>
</dbReference>
<dbReference type="Proteomes" id="UP000515153">
    <property type="component" value="Unplaced"/>
</dbReference>
<dbReference type="GO" id="GO:0005886">
    <property type="term" value="C:plasma membrane"/>
    <property type="evidence" value="ECO:0007669"/>
    <property type="project" value="UniProtKB-SubCell"/>
</dbReference>
<dbReference type="GO" id="GO:0022857">
    <property type="term" value="F:transmembrane transporter activity"/>
    <property type="evidence" value="ECO:0007669"/>
    <property type="project" value="InterPro"/>
</dbReference>
<dbReference type="CDD" id="cd17502">
    <property type="entry name" value="MFS_Azr1_MDR_like"/>
    <property type="match status" value="1"/>
</dbReference>
<dbReference type="Gene3D" id="1.20.1250.20">
    <property type="entry name" value="MFS general substrate transporter like domains"/>
    <property type="match status" value="1"/>
</dbReference>
<dbReference type="Gene3D" id="1.20.1720.10">
    <property type="entry name" value="Multidrug resistance protein D"/>
    <property type="match status" value="1"/>
</dbReference>
<dbReference type="InterPro" id="IPR011701">
    <property type="entry name" value="MFS"/>
</dbReference>
<dbReference type="InterPro" id="IPR020846">
    <property type="entry name" value="MFS_dom"/>
</dbReference>
<dbReference type="InterPro" id="IPR036259">
    <property type="entry name" value="MFS_trans_sf"/>
</dbReference>
<dbReference type="PANTHER" id="PTHR23501">
    <property type="entry name" value="MAJOR FACILITATOR SUPERFAMILY"/>
    <property type="match status" value="1"/>
</dbReference>
<dbReference type="PANTHER" id="PTHR23501:SF187">
    <property type="entry name" value="MAJOR FACILITATOR SUPERFAMILY (MFS) PROFILE DOMAIN-CONTAINING PROTEIN"/>
    <property type="match status" value="1"/>
</dbReference>
<dbReference type="Pfam" id="PF07690">
    <property type="entry name" value="MFS_1"/>
    <property type="match status" value="1"/>
</dbReference>
<dbReference type="SUPFAM" id="SSF103473">
    <property type="entry name" value="MFS general substrate transporter"/>
    <property type="match status" value="1"/>
</dbReference>
<dbReference type="PROSITE" id="PS50850">
    <property type="entry name" value="MFS"/>
    <property type="match status" value="1"/>
</dbReference>
<protein>
    <recommendedName>
        <fullName evidence="5">MFS-type efflux transporter pyiT</fullName>
    </recommendedName>
    <alternativeName>
        <fullName evidence="5">Pyrichalasin H biosynthesis cluster protein T</fullName>
    </alternativeName>
</protein>
<gene>
    <name evidence="5" type="primary">pyiT</name>
</gene>
<keyword id="KW-1003">Cell membrane</keyword>
<keyword id="KW-0325">Glycoprotein</keyword>
<keyword id="KW-0472">Membrane</keyword>
<keyword id="KW-1185">Reference proteome</keyword>
<keyword id="KW-0812">Transmembrane</keyword>
<keyword id="KW-1133">Transmembrane helix</keyword>
<keyword id="KW-0813">Transport</keyword>
<organism>
    <name type="scientific">Pyricularia grisea</name>
    <name type="common">Crabgrass-specific blast fungus</name>
    <name type="synonym">Magnaporthe grisea</name>
    <dbReference type="NCBI Taxonomy" id="148305"/>
    <lineage>
        <taxon>Eukaryota</taxon>
        <taxon>Fungi</taxon>
        <taxon>Dikarya</taxon>
        <taxon>Ascomycota</taxon>
        <taxon>Pezizomycotina</taxon>
        <taxon>Sordariomycetes</taxon>
        <taxon>Sordariomycetidae</taxon>
        <taxon>Magnaporthales</taxon>
        <taxon>Pyriculariaceae</taxon>
        <taxon>Pyricularia</taxon>
    </lineage>
</organism>
<feature type="chain" id="PRO_0000449448" description="MFS-type efflux transporter pyiT">
    <location>
        <begin position="1"/>
        <end position="602"/>
    </location>
</feature>
<feature type="transmembrane region" description="Helical" evidence="1">
    <location>
        <begin position="43"/>
        <end position="63"/>
    </location>
</feature>
<feature type="transmembrane region" description="Helical" evidence="1">
    <location>
        <begin position="123"/>
        <end position="143"/>
    </location>
</feature>
<feature type="transmembrane region" description="Helical" evidence="1">
    <location>
        <begin position="156"/>
        <end position="176"/>
    </location>
</feature>
<feature type="transmembrane region" description="Helical" evidence="1">
    <location>
        <begin position="185"/>
        <end position="205"/>
    </location>
</feature>
<feature type="transmembrane region" description="Helical" evidence="1">
    <location>
        <begin position="212"/>
        <end position="232"/>
    </location>
</feature>
<feature type="transmembrane region" description="Helical" evidence="1">
    <location>
        <begin position="251"/>
        <end position="271"/>
    </location>
</feature>
<feature type="transmembrane region" description="Helical" evidence="1">
    <location>
        <begin position="282"/>
        <end position="302"/>
    </location>
</feature>
<feature type="transmembrane region" description="Helical" evidence="1">
    <location>
        <begin position="325"/>
        <end position="345"/>
    </location>
</feature>
<feature type="transmembrane region" description="Helical" evidence="1">
    <location>
        <begin position="357"/>
        <end position="377"/>
    </location>
</feature>
<feature type="transmembrane region" description="Helical" evidence="1">
    <location>
        <begin position="386"/>
        <end position="406"/>
    </location>
</feature>
<feature type="transmembrane region" description="Helical" evidence="1">
    <location>
        <begin position="410"/>
        <end position="430"/>
    </location>
</feature>
<feature type="transmembrane region" description="Helical" evidence="1">
    <location>
        <begin position="451"/>
        <end position="471"/>
    </location>
</feature>
<feature type="transmembrane region" description="Helical" evidence="1">
    <location>
        <begin position="524"/>
        <end position="544"/>
    </location>
</feature>
<feature type="region of interest" description="Disordered" evidence="3">
    <location>
        <begin position="1"/>
        <end position="33"/>
    </location>
</feature>
<feature type="region of interest" description="Disordered" evidence="3">
    <location>
        <begin position="564"/>
        <end position="602"/>
    </location>
</feature>
<feature type="compositionally biased region" description="Polar residues" evidence="3">
    <location>
        <begin position="564"/>
        <end position="585"/>
    </location>
</feature>
<feature type="glycosylation site" description="N-linked (GlcNAc...) asparagine" evidence="2">
    <location>
        <position position="317"/>
    </location>
</feature>
<feature type="glycosylation site" description="N-linked (GlcNAc...) asparagine" evidence="2">
    <location>
        <position position="580"/>
    </location>
</feature>
<name>PYIT_PYRGI</name>
<comment type="function">
    <text evidence="4 7 8">MFS-type efflux transporter; part of the gene cluster that mediates the biosynthesis of the mycotoxin pyrichalasin H, a tyrosine-derived cytochalasan that inhibits the growth of rice seedlings, but also inhibits lymphocyte capping and actin polymerization and alters cell morphology (Probable) (PubMed:31099577). Pyrichalasin H is indicated as the responsible agent for the genus-specific pathogenicity of M.grisea toward crabgrass (PubMed:31099577). PyiT might be involved in the excretion of pyrichalasin H (Probable).</text>
</comment>
<comment type="subcellular location">
    <subcellularLocation>
        <location evidence="6">Cell membrane</location>
        <topology evidence="1">Multi-pass membrane protein</topology>
    </subcellularLocation>
</comment>
<comment type="similarity">
    <text evidence="6">Belongs to the major facilitator superfamily.</text>
</comment>
<reference key="1">
    <citation type="journal article" date="2019" name="Org. Lett.">
        <title>Targeted gene inactivations expose silent cytochalasans in Magnaporthe grisea NI980.</title>
        <authorList>
            <person name="Wang C."/>
            <person name="Hantke V."/>
            <person name="Cox R.J."/>
            <person name="Skellam E."/>
        </authorList>
    </citation>
    <scope>NUCLEOTIDE SEQUENCE [GENOMIC DNA]</scope>
    <scope>FUNCTION</scope>
    <source>
        <strain>NI980</strain>
    </source>
</reference>
<reference key="2">
    <citation type="journal article" date="2019" name="Org. Lett.">
        <title>Investigating the function of cryptic cytochalasan cytochrome P450 monooxygenases using combinatorial biosynthesis.</title>
        <authorList>
            <person name="Wang C."/>
            <person name="Becker K."/>
            <person name="Pfuetze S."/>
            <person name="Kuhnert E."/>
            <person name="Stadler M."/>
            <person name="Cox R.J."/>
            <person name="Skellam E."/>
        </authorList>
    </citation>
    <scope>FUNCTION</scope>
</reference>
<proteinExistence type="inferred from homology"/>
<evidence type="ECO:0000255" key="1"/>
<evidence type="ECO:0000255" key="2">
    <source>
        <dbReference type="PROSITE-ProRule" id="PRU00498"/>
    </source>
</evidence>
<evidence type="ECO:0000256" key="3">
    <source>
        <dbReference type="SAM" id="MobiDB-lite"/>
    </source>
</evidence>
<evidence type="ECO:0000269" key="4">
    <source>
    </source>
</evidence>
<evidence type="ECO:0000303" key="5">
    <source>
    </source>
</evidence>
<evidence type="ECO:0000305" key="6"/>
<evidence type="ECO:0000305" key="7">
    <source>
    </source>
</evidence>
<evidence type="ECO:0000305" key="8">
    <source>
    </source>
</evidence>